<reference key="1">
    <citation type="submission" date="2003-01" db="EMBL/GenBank/DDBJ databases">
        <authorList>
            <consortium name="NIH - Zebrafish Gene Collection (ZGC) project"/>
        </authorList>
    </citation>
    <scope>NUCLEOTIDE SEQUENCE [LARGE SCALE MRNA]</scope>
    <source>
        <strain>AB</strain>
    </source>
</reference>
<sequence length="428" mass="48980">MTNRTAYFYDPDVGNFHYGAGHPMKPHRLSLTHSLVLHYGLYKKMMVFKPYKASQHDMCRFHSEDYIDFLQKVSPNNMQGFTKSLNTFNVGGDCPVFPGLFEFCSRYTGASLQGATQLNHKICDIAINWAGGLHHAKKFEASGFCYVNDIVISILELLKYHPRVLYIDIDIHHGDGVQEAFYLTDRVMTVSFHKYGNYFFPGTGDMYEVGAESGRYYCLNVPLRDGIDDQSYRQLFQPVIKQVVDFYQPTCIVLQCGADSLGCDRLGCFNLSIRGHGECVEFVKGFKIPLLVLGGGGYTVRNVARCWTFETSLLVEESISDELPYSEYFEYFAPDFTLHPDVSTRIENQNSRQYLEQIRQTVFENLKMLNHAPSVQIRDVPSDLLSYERPDEADPEERGSEENFSRPEAANEFYDGDHDHDKESDVEI</sequence>
<protein>
    <recommendedName>
        <fullName>Histone deacetylase 3</fullName>
        <shortName>HD3</shortName>
        <ecNumber evidence="1">3.5.1.98</ecNumber>
    </recommendedName>
    <alternativeName>
        <fullName>Protein deacetylase HDAC3</fullName>
        <ecNumber evidence="1">3.5.1.-</ecNumber>
    </alternativeName>
    <alternativeName>
        <fullName>Protein deacylase HDAC3</fullName>
        <ecNumber evidence="1">3.5.1.-</ecNumber>
    </alternativeName>
</protein>
<keyword id="KW-0090">Biological rhythms</keyword>
<keyword id="KW-0156">Chromatin regulator</keyword>
<keyword id="KW-0158">Chromosome</keyword>
<keyword id="KW-0963">Cytoplasm</keyword>
<keyword id="KW-0378">Hydrolase</keyword>
<keyword id="KW-0479">Metal-binding</keyword>
<keyword id="KW-0539">Nucleus</keyword>
<keyword id="KW-1185">Reference proteome</keyword>
<keyword id="KW-0678">Repressor</keyword>
<keyword id="KW-0804">Transcription</keyword>
<keyword id="KW-0805">Transcription regulation</keyword>
<keyword id="KW-0862">Zinc</keyword>
<gene>
    <name type="primary">hdac3</name>
    <name type="ORF">zgc:55927</name>
</gene>
<dbReference type="EC" id="3.5.1.98" evidence="1"/>
<dbReference type="EC" id="3.5.1.-" evidence="1"/>
<dbReference type="EMBL" id="BC044543">
    <property type="protein sequence ID" value="AAH44543.1"/>
    <property type="molecule type" value="mRNA"/>
</dbReference>
<dbReference type="RefSeq" id="NP_957284.1">
    <property type="nucleotide sequence ID" value="NM_200990.1"/>
</dbReference>
<dbReference type="SMR" id="Q803C3"/>
<dbReference type="FunCoup" id="Q803C3">
    <property type="interactions" value="619"/>
</dbReference>
<dbReference type="STRING" id="7955.ENSDARP00000054625"/>
<dbReference type="PaxDb" id="7955-ENSDARP00000054625"/>
<dbReference type="GeneID" id="393965"/>
<dbReference type="KEGG" id="dre:393965"/>
<dbReference type="AGR" id="ZFIN:ZDB-GENE-040426-847"/>
<dbReference type="CTD" id="8841"/>
<dbReference type="ZFIN" id="ZDB-GENE-040426-847">
    <property type="gene designation" value="hdac3"/>
</dbReference>
<dbReference type="eggNOG" id="KOG1342">
    <property type="taxonomic scope" value="Eukaryota"/>
</dbReference>
<dbReference type="InParanoid" id="Q803C3"/>
<dbReference type="OrthoDB" id="1918432at2759"/>
<dbReference type="PhylomeDB" id="Q803C3"/>
<dbReference type="BRENDA" id="3.5.1.98">
    <property type="organism ID" value="928"/>
</dbReference>
<dbReference type="Reactome" id="R-DRE-400206">
    <property type="pathway name" value="Regulation of lipid metabolism by PPARalpha"/>
</dbReference>
<dbReference type="Reactome" id="R-DRE-9707564">
    <property type="pathway name" value="Cytoprotection by HMOX1"/>
</dbReference>
<dbReference type="PRO" id="PR:Q803C3"/>
<dbReference type="Proteomes" id="UP000000437">
    <property type="component" value="Alternate scaffold 14"/>
</dbReference>
<dbReference type="Proteomes" id="UP000000437">
    <property type="component" value="Chromosome 14"/>
</dbReference>
<dbReference type="GO" id="GO:0005694">
    <property type="term" value="C:chromosome"/>
    <property type="evidence" value="ECO:0007669"/>
    <property type="project" value="UniProtKB-SubCell"/>
</dbReference>
<dbReference type="GO" id="GO:0005737">
    <property type="term" value="C:cytoplasm"/>
    <property type="evidence" value="ECO:0000250"/>
    <property type="project" value="UniProtKB"/>
</dbReference>
<dbReference type="GO" id="GO:0005829">
    <property type="term" value="C:cytosol"/>
    <property type="evidence" value="ECO:0007669"/>
    <property type="project" value="UniProtKB-SubCell"/>
</dbReference>
<dbReference type="GO" id="GO:0005634">
    <property type="term" value="C:nucleus"/>
    <property type="evidence" value="ECO:0000250"/>
    <property type="project" value="UniProtKB"/>
</dbReference>
<dbReference type="GO" id="GO:0017053">
    <property type="term" value="C:transcription repressor complex"/>
    <property type="evidence" value="ECO:0000250"/>
    <property type="project" value="UniProtKB"/>
</dbReference>
<dbReference type="GO" id="GO:0003682">
    <property type="term" value="F:chromatin binding"/>
    <property type="evidence" value="ECO:0000250"/>
    <property type="project" value="UniProtKB"/>
</dbReference>
<dbReference type="GO" id="GO:0004407">
    <property type="term" value="F:histone deacetylase activity"/>
    <property type="evidence" value="ECO:0000318"/>
    <property type="project" value="GO_Central"/>
</dbReference>
<dbReference type="GO" id="GO:0141221">
    <property type="term" value="F:histone deacetylase activity, hydrolytic mechanism"/>
    <property type="evidence" value="ECO:0007669"/>
    <property type="project" value="UniProtKB-EC"/>
</dbReference>
<dbReference type="GO" id="GO:0160009">
    <property type="term" value="F:histone decrotonylase activity"/>
    <property type="evidence" value="ECO:0000250"/>
    <property type="project" value="UniProtKB"/>
</dbReference>
<dbReference type="GO" id="GO:0046872">
    <property type="term" value="F:metal ion binding"/>
    <property type="evidence" value="ECO:0007669"/>
    <property type="project" value="UniProtKB-KW"/>
</dbReference>
<dbReference type="GO" id="GO:0160010">
    <property type="term" value="F:protein de-2-hydroxyisobutyrylase activity"/>
    <property type="evidence" value="ECO:0000250"/>
    <property type="project" value="UniProtKB"/>
</dbReference>
<dbReference type="GO" id="GO:0160008">
    <property type="term" value="F:protein decrotonylase activity"/>
    <property type="evidence" value="ECO:0000250"/>
    <property type="project" value="UniProtKB"/>
</dbReference>
<dbReference type="GO" id="GO:0033558">
    <property type="term" value="F:protein lysine deacetylase activity"/>
    <property type="evidence" value="ECO:0000250"/>
    <property type="project" value="UniProtKB"/>
</dbReference>
<dbReference type="GO" id="GO:0160216">
    <property type="term" value="F:protein lysine delactylase activity"/>
    <property type="evidence" value="ECO:0000250"/>
    <property type="project" value="UniProtKB"/>
</dbReference>
<dbReference type="GO" id="GO:0003714">
    <property type="term" value="F:transcription corepressor activity"/>
    <property type="evidence" value="ECO:0000250"/>
    <property type="project" value="UniProtKB"/>
</dbReference>
<dbReference type="GO" id="GO:0001525">
    <property type="term" value="P:angiogenesis"/>
    <property type="evidence" value="ECO:0000315"/>
    <property type="project" value="ZFIN"/>
</dbReference>
<dbReference type="GO" id="GO:0032922">
    <property type="term" value="P:circadian regulation of gene expression"/>
    <property type="evidence" value="ECO:0000250"/>
    <property type="project" value="UniProtKB"/>
</dbReference>
<dbReference type="GO" id="GO:0009953">
    <property type="term" value="P:dorsal/ventral pattern formation"/>
    <property type="evidence" value="ECO:0000316"/>
    <property type="project" value="ZFIN"/>
</dbReference>
<dbReference type="GO" id="GO:0040029">
    <property type="term" value="P:epigenetic regulation of gene expression"/>
    <property type="evidence" value="ECO:0000318"/>
    <property type="project" value="GO_Central"/>
</dbReference>
<dbReference type="GO" id="GO:0001889">
    <property type="term" value="P:liver development"/>
    <property type="evidence" value="ECO:0000315"/>
    <property type="project" value="ZFIN"/>
</dbReference>
<dbReference type="GO" id="GO:0000122">
    <property type="term" value="P:negative regulation of transcription by RNA polymerase II"/>
    <property type="evidence" value="ECO:0000250"/>
    <property type="project" value="UniProtKB"/>
</dbReference>
<dbReference type="GO" id="GO:0048916">
    <property type="term" value="P:posterior lateral line development"/>
    <property type="evidence" value="ECO:0000315"/>
    <property type="project" value="ZFIN"/>
</dbReference>
<dbReference type="GO" id="GO:0042752">
    <property type="term" value="P:regulation of circadian rhythm"/>
    <property type="evidence" value="ECO:0000250"/>
    <property type="project" value="UniProtKB"/>
</dbReference>
<dbReference type="CDD" id="cd10005">
    <property type="entry name" value="HDAC3"/>
    <property type="match status" value="1"/>
</dbReference>
<dbReference type="FunFam" id="3.40.800.20:FF:000004">
    <property type="entry name" value="Histone deacetylase"/>
    <property type="match status" value="1"/>
</dbReference>
<dbReference type="Gene3D" id="3.40.800.20">
    <property type="entry name" value="Histone deacetylase domain"/>
    <property type="match status" value="1"/>
</dbReference>
<dbReference type="InterPro" id="IPR050284">
    <property type="entry name" value="HDAC_PDAC"/>
</dbReference>
<dbReference type="InterPro" id="IPR000286">
    <property type="entry name" value="His_deacetylse"/>
</dbReference>
<dbReference type="InterPro" id="IPR003084">
    <property type="entry name" value="His_deacetylse_1"/>
</dbReference>
<dbReference type="InterPro" id="IPR023801">
    <property type="entry name" value="His_deacetylse_dom"/>
</dbReference>
<dbReference type="InterPro" id="IPR037138">
    <property type="entry name" value="His_deacetylse_dom_sf"/>
</dbReference>
<dbReference type="InterPro" id="IPR023696">
    <property type="entry name" value="Ureohydrolase_dom_sf"/>
</dbReference>
<dbReference type="PANTHER" id="PTHR10625:SF36">
    <property type="entry name" value="HISTONE DEACETYLASE 3"/>
    <property type="match status" value="1"/>
</dbReference>
<dbReference type="PANTHER" id="PTHR10625">
    <property type="entry name" value="HISTONE DEACETYLASE HDAC1-RELATED"/>
    <property type="match status" value="1"/>
</dbReference>
<dbReference type="Pfam" id="PF00850">
    <property type="entry name" value="Hist_deacetyl"/>
    <property type="match status" value="1"/>
</dbReference>
<dbReference type="PIRSF" id="PIRSF037913">
    <property type="entry name" value="His_deacetylse_1"/>
    <property type="match status" value="1"/>
</dbReference>
<dbReference type="PRINTS" id="PR01270">
    <property type="entry name" value="HDASUPER"/>
</dbReference>
<dbReference type="PRINTS" id="PR01271">
    <property type="entry name" value="HISDACETLASE"/>
</dbReference>
<dbReference type="SUPFAM" id="SSF52768">
    <property type="entry name" value="Arginase/deacetylase"/>
    <property type="match status" value="1"/>
</dbReference>
<feature type="chain" id="PRO_0000281031" description="Histone deacetylase 3">
    <location>
        <begin position="1"/>
        <end position="428"/>
    </location>
</feature>
<feature type="region of interest" description="Histone deacetylase">
    <location>
        <begin position="3"/>
        <end position="316"/>
    </location>
</feature>
<feature type="region of interest" description="Disordered" evidence="3">
    <location>
        <begin position="381"/>
        <end position="428"/>
    </location>
</feature>
<feature type="compositionally biased region" description="Basic and acidic residues" evidence="3">
    <location>
        <begin position="386"/>
        <end position="405"/>
    </location>
</feature>
<feature type="compositionally biased region" description="Basic and acidic residues" evidence="3">
    <location>
        <begin position="415"/>
        <end position="428"/>
    </location>
</feature>
<feature type="active site" evidence="2">
    <location>
        <position position="135"/>
    </location>
</feature>
<feature type="binding site" evidence="1">
    <location>
        <position position="17"/>
    </location>
    <ligand>
        <name>1D-myo-inositol 1,4,5,6-tetrakisphosphate</name>
        <dbReference type="ChEBI" id="CHEBI:57627"/>
    </ligand>
</feature>
<feature type="binding site" evidence="1">
    <location>
        <position position="21"/>
    </location>
    <ligand>
        <name>1D-myo-inositol 1,4,5,6-tetrakisphosphate</name>
        <dbReference type="ChEBI" id="CHEBI:57627"/>
    </ligand>
</feature>
<feature type="binding site" evidence="1">
    <location>
        <position position="25"/>
    </location>
    <ligand>
        <name>1D-myo-inositol 1,4,5,6-tetrakisphosphate</name>
        <dbReference type="ChEBI" id="CHEBI:57627"/>
    </ligand>
</feature>
<feature type="binding site" evidence="1">
    <location>
        <position position="170"/>
    </location>
    <ligand>
        <name>Zn(2+)</name>
        <dbReference type="ChEBI" id="CHEBI:29105"/>
    </ligand>
</feature>
<feature type="binding site" evidence="1">
    <location>
        <position position="172"/>
    </location>
    <ligand>
        <name>Zn(2+)</name>
        <dbReference type="ChEBI" id="CHEBI:29105"/>
    </ligand>
</feature>
<feature type="binding site" evidence="1">
    <location>
        <position position="259"/>
    </location>
    <ligand>
        <name>Zn(2+)</name>
        <dbReference type="ChEBI" id="CHEBI:29105"/>
    </ligand>
</feature>
<feature type="binding site" evidence="1">
    <location>
        <position position="265"/>
    </location>
    <ligand>
        <name>1D-myo-inositol 1,4,5,6-tetrakisphosphate</name>
        <dbReference type="ChEBI" id="CHEBI:57627"/>
    </ligand>
</feature>
<accession>Q803C3</accession>
<proteinExistence type="evidence at transcript level"/>
<evidence type="ECO:0000250" key="1">
    <source>
        <dbReference type="UniProtKB" id="O15379"/>
    </source>
</evidence>
<evidence type="ECO:0000250" key="2">
    <source>
        <dbReference type="UniProtKB" id="Q13547"/>
    </source>
</evidence>
<evidence type="ECO:0000256" key="3">
    <source>
        <dbReference type="SAM" id="MobiDB-lite"/>
    </source>
</evidence>
<evidence type="ECO:0000305" key="4"/>
<organism>
    <name type="scientific">Danio rerio</name>
    <name type="common">Zebrafish</name>
    <name type="synonym">Brachydanio rerio</name>
    <dbReference type="NCBI Taxonomy" id="7955"/>
    <lineage>
        <taxon>Eukaryota</taxon>
        <taxon>Metazoa</taxon>
        <taxon>Chordata</taxon>
        <taxon>Craniata</taxon>
        <taxon>Vertebrata</taxon>
        <taxon>Euteleostomi</taxon>
        <taxon>Actinopterygii</taxon>
        <taxon>Neopterygii</taxon>
        <taxon>Teleostei</taxon>
        <taxon>Ostariophysi</taxon>
        <taxon>Cypriniformes</taxon>
        <taxon>Danionidae</taxon>
        <taxon>Danioninae</taxon>
        <taxon>Danio</taxon>
    </lineage>
</organism>
<name>HDAC3_DANRE</name>
<comment type="function">
    <text evidence="1">Histone deacetylase that catalyzes the deacetylation of lysine residues on the N-terminal part of the core histones (H2A, H2B, H3 and H4), and some other non-histone substrates. Histone deacetylation gives a tag for epigenetic repression and plays an important role in transcriptional regulation, cell cycle progression and developmental events. Histone deacetylases act via the formation of large multiprotein complexes, such as N-Cor repressor complex, which activate the histone deacetylase activity. Participates in the BCL6 transcriptional repressor activity by deacetylating the H3 'Lys-27' (H3K27) on enhancer elements, antagonizing EP300 acetyltransferase activity and repressing proximal gene expression. Also functions as a deacetylase for non-histone targets. In addition to protein deacetylase activity, also acts as a protein-lysine deacylase by recognizing other acyl groups: catalyzes removal of (2E)-butenoyl (crotonyl), lactoyl (lactyl) and 2-hydroxyisobutanoyl (2-hydroxyisobutyryl) acyl groups from lysine residues, leading to protein decrotonylation, delactylation and de-2-hydroxyisobutyrylation, respectively.</text>
</comment>
<comment type="catalytic activity">
    <reaction evidence="1">
        <text>N(6)-acetyl-L-lysyl-[histone] + H2O = L-lysyl-[histone] + acetate</text>
        <dbReference type="Rhea" id="RHEA:58196"/>
        <dbReference type="Rhea" id="RHEA-COMP:9845"/>
        <dbReference type="Rhea" id="RHEA-COMP:11338"/>
        <dbReference type="ChEBI" id="CHEBI:15377"/>
        <dbReference type="ChEBI" id="CHEBI:29969"/>
        <dbReference type="ChEBI" id="CHEBI:30089"/>
        <dbReference type="ChEBI" id="CHEBI:61930"/>
        <dbReference type="EC" id="3.5.1.98"/>
    </reaction>
    <physiologicalReaction direction="left-to-right" evidence="1">
        <dbReference type="Rhea" id="RHEA:58197"/>
    </physiologicalReaction>
</comment>
<comment type="catalytic activity">
    <reaction evidence="1">
        <text>N(6)-acetyl-L-lysyl-[protein] + H2O = L-lysyl-[protein] + acetate</text>
        <dbReference type="Rhea" id="RHEA:58108"/>
        <dbReference type="Rhea" id="RHEA-COMP:9752"/>
        <dbReference type="Rhea" id="RHEA-COMP:10731"/>
        <dbReference type="ChEBI" id="CHEBI:15377"/>
        <dbReference type="ChEBI" id="CHEBI:29969"/>
        <dbReference type="ChEBI" id="CHEBI:30089"/>
        <dbReference type="ChEBI" id="CHEBI:61930"/>
    </reaction>
    <physiologicalReaction direction="left-to-right" evidence="1">
        <dbReference type="Rhea" id="RHEA:58109"/>
    </physiologicalReaction>
</comment>
<comment type="catalytic activity">
    <reaction evidence="1">
        <text>N(6)-(2E)-butenoyl-L-lysyl-[protein] + H2O = (2E)-2-butenoate + L-lysyl-[protein]</text>
        <dbReference type="Rhea" id="RHEA:69172"/>
        <dbReference type="Rhea" id="RHEA-COMP:9752"/>
        <dbReference type="Rhea" id="RHEA-COMP:13707"/>
        <dbReference type="ChEBI" id="CHEBI:15377"/>
        <dbReference type="ChEBI" id="CHEBI:29969"/>
        <dbReference type="ChEBI" id="CHEBI:35899"/>
        <dbReference type="ChEBI" id="CHEBI:137954"/>
    </reaction>
    <physiologicalReaction direction="left-to-right" evidence="1">
        <dbReference type="Rhea" id="RHEA:69173"/>
    </physiologicalReaction>
</comment>
<comment type="catalytic activity">
    <reaction evidence="1">
        <text>N(6)-(2-hydroxyisobutanoyl)-L-lysyl-[protein] + H2O = 2-hydroxy-2-methylpropanoate + L-lysyl-[protein]</text>
        <dbReference type="Rhea" id="RHEA:69176"/>
        <dbReference type="Rhea" id="RHEA-COMP:9752"/>
        <dbReference type="Rhea" id="RHEA-COMP:15921"/>
        <dbReference type="ChEBI" id="CHEBI:15377"/>
        <dbReference type="ChEBI" id="CHEBI:19641"/>
        <dbReference type="ChEBI" id="CHEBI:29969"/>
        <dbReference type="ChEBI" id="CHEBI:144968"/>
    </reaction>
    <physiologicalReaction direction="left-to-right" evidence="1">
        <dbReference type="Rhea" id="RHEA:69177"/>
    </physiologicalReaction>
</comment>
<comment type="catalytic activity">
    <reaction evidence="1">
        <text>N(6)-[(S)-lactoyl]-L-lysyl-[protein] + H2O = (S)-lactate + L-lysyl-[protein]</text>
        <dbReference type="Rhea" id="RHEA:81387"/>
        <dbReference type="Rhea" id="RHEA-COMP:9752"/>
        <dbReference type="Rhea" id="RHEA-COMP:19466"/>
        <dbReference type="ChEBI" id="CHEBI:15377"/>
        <dbReference type="ChEBI" id="CHEBI:16651"/>
        <dbReference type="ChEBI" id="CHEBI:29969"/>
        <dbReference type="ChEBI" id="CHEBI:231527"/>
    </reaction>
    <physiologicalReaction direction="left-to-right" evidence="1">
        <dbReference type="Rhea" id="RHEA:81388"/>
    </physiologicalReaction>
</comment>
<comment type="activity regulation">
    <text evidence="1">Inositol tetraphosphate (1D-myo-inositol 1,4,5,6-tetrakisphosphate) promotes the histone deacetylase activity by acting as an intermolecular glue between hdac3 and N-Cor repressor complex components.</text>
</comment>
<comment type="subcellular location">
    <subcellularLocation>
        <location evidence="1">Nucleus</location>
    </subcellularLocation>
    <subcellularLocation>
        <location evidence="1">Chromosome</location>
    </subcellularLocation>
    <subcellularLocation>
        <location evidence="1">Cytoplasm</location>
        <location evidence="1">Cytosol</location>
    </subcellularLocation>
</comment>
<comment type="similarity">
    <text evidence="4">Belongs to the histone deacetylase family. HD type 1 subfamily.</text>
</comment>